<evidence type="ECO:0000250" key="1"/>
<evidence type="ECO:0000255" key="2">
    <source>
        <dbReference type="HAMAP-Rule" id="MF_00480"/>
    </source>
</evidence>
<evidence type="ECO:0000305" key="3"/>
<comment type="function">
    <text evidence="1">One of the primary rRNA binding proteins, it binds directly to 16S rRNA where it nucleates assembly of the head domain of the 30S subunit.</text>
</comment>
<comment type="subunit">
    <text evidence="1">Part of the 30S ribosomal subunit.</text>
</comment>
<comment type="subcellular location">
    <subcellularLocation>
        <location>Plastid</location>
        <location>Chloroplast</location>
    </subcellularLocation>
</comment>
<comment type="similarity">
    <text evidence="3">Belongs to the universal ribosomal protein uS7 family.</text>
</comment>
<keyword id="KW-0150">Chloroplast</keyword>
<keyword id="KW-0934">Plastid</keyword>
<keyword id="KW-0687">Ribonucleoprotein</keyword>
<keyword id="KW-0689">Ribosomal protein</keyword>
<keyword id="KW-0694">RNA-binding</keyword>
<keyword id="KW-0699">rRNA-binding</keyword>
<feature type="chain" id="PRO_0000344344" description="Small ribosomal subunit protein uS7cz/uS7cy">
    <location>
        <begin position="1"/>
        <end position="155"/>
    </location>
</feature>
<accession>A9L9E1</accession>
<geneLocation type="chloroplast"/>
<reference key="1">
    <citation type="journal article" date="2008" name="J. Mol. Evol.">
        <title>Complete sequence of the Duckweed (Lemna minor) chloroplast genome: structural organization and phylogenetic relationships to other angiosperms.</title>
        <authorList>
            <person name="Mardanov A.V."/>
            <person name="Ravin N.V."/>
            <person name="Kuznetsov B.B."/>
            <person name="Samigullin T.H."/>
            <person name="Antonov A.S."/>
            <person name="Kolganova T.V."/>
            <person name="Skyabin K.G."/>
        </authorList>
    </citation>
    <scope>NUCLEOTIDE SEQUENCE [LARGE SCALE GENOMIC DNA]</scope>
</reference>
<gene>
    <name type="primary">rps7-A</name>
</gene>
<gene>
    <name type="primary">rps7-B</name>
</gene>
<name>RR7_LEMMI</name>
<protein>
    <recommendedName>
        <fullName evidence="2">Small ribosomal subunit protein uS7cz/uS7cy</fullName>
    </recommendedName>
    <alternativeName>
        <fullName>30S ribosomal protein S7, chloroplastic</fullName>
    </alternativeName>
</protein>
<sequence>MSRRGTAEKKTAKSDPIYRNRLVNMLVNRILKHGKKSLAYQIIYRAVKKIQQKTETNPLSVLRQAIRGVTPDIAVKSRRVGGSTHQVPIEIGSTQGKALAIRWLLAASRKRPGRNMAFKLSSELVDAAKGSGDAIRKKEETHKMAEANRAFAHFR</sequence>
<dbReference type="EMBL" id="DQ400350">
    <property type="protein sequence ID" value="ABD48540.1"/>
    <property type="molecule type" value="Genomic_DNA"/>
</dbReference>
<dbReference type="EMBL" id="DQ400350">
    <property type="protein sequence ID" value="ABD48555.1"/>
    <property type="molecule type" value="Genomic_DNA"/>
</dbReference>
<dbReference type="SMR" id="A9L9E1"/>
<dbReference type="GO" id="GO:0009507">
    <property type="term" value="C:chloroplast"/>
    <property type="evidence" value="ECO:0007669"/>
    <property type="project" value="UniProtKB-SubCell"/>
</dbReference>
<dbReference type="GO" id="GO:0015935">
    <property type="term" value="C:small ribosomal subunit"/>
    <property type="evidence" value="ECO:0007669"/>
    <property type="project" value="InterPro"/>
</dbReference>
<dbReference type="GO" id="GO:0019843">
    <property type="term" value="F:rRNA binding"/>
    <property type="evidence" value="ECO:0007669"/>
    <property type="project" value="UniProtKB-UniRule"/>
</dbReference>
<dbReference type="GO" id="GO:0003735">
    <property type="term" value="F:structural constituent of ribosome"/>
    <property type="evidence" value="ECO:0007669"/>
    <property type="project" value="InterPro"/>
</dbReference>
<dbReference type="GO" id="GO:0006412">
    <property type="term" value="P:translation"/>
    <property type="evidence" value="ECO:0007669"/>
    <property type="project" value="UniProtKB-UniRule"/>
</dbReference>
<dbReference type="CDD" id="cd14871">
    <property type="entry name" value="uS7_Chloroplast"/>
    <property type="match status" value="1"/>
</dbReference>
<dbReference type="FunFam" id="1.10.455.10:FF:000001">
    <property type="entry name" value="30S ribosomal protein S7"/>
    <property type="match status" value="1"/>
</dbReference>
<dbReference type="Gene3D" id="1.10.455.10">
    <property type="entry name" value="Ribosomal protein S7 domain"/>
    <property type="match status" value="1"/>
</dbReference>
<dbReference type="HAMAP" id="MF_00480_B">
    <property type="entry name" value="Ribosomal_uS7_B"/>
    <property type="match status" value="1"/>
</dbReference>
<dbReference type="InterPro" id="IPR000235">
    <property type="entry name" value="Ribosomal_uS7"/>
</dbReference>
<dbReference type="InterPro" id="IPR005717">
    <property type="entry name" value="Ribosomal_uS7_bac/org-type"/>
</dbReference>
<dbReference type="InterPro" id="IPR020606">
    <property type="entry name" value="Ribosomal_uS7_CS"/>
</dbReference>
<dbReference type="InterPro" id="IPR023798">
    <property type="entry name" value="Ribosomal_uS7_dom"/>
</dbReference>
<dbReference type="InterPro" id="IPR036823">
    <property type="entry name" value="Ribosomal_uS7_dom_sf"/>
</dbReference>
<dbReference type="NCBIfam" id="TIGR01029">
    <property type="entry name" value="rpsG_bact"/>
    <property type="match status" value="1"/>
</dbReference>
<dbReference type="PANTHER" id="PTHR11205">
    <property type="entry name" value="RIBOSOMAL PROTEIN S7"/>
    <property type="match status" value="1"/>
</dbReference>
<dbReference type="Pfam" id="PF00177">
    <property type="entry name" value="Ribosomal_S7"/>
    <property type="match status" value="1"/>
</dbReference>
<dbReference type="PIRSF" id="PIRSF002122">
    <property type="entry name" value="RPS7p_RPS7a_RPS5e_RPS7o"/>
    <property type="match status" value="1"/>
</dbReference>
<dbReference type="SUPFAM" id="SSF47973">
    <property type="entry name" value="Ribosomal protein S7"/>
    <property type="match status" value="1"/>
</dbReference>
<dbReference type="PROSITE" id="PS00052">
    <property type="entry name" value="RIBOSOMAL_S7"/>
    <property type="match status" value="1"/>
</dbReference>
<organism>
    <name type="scientific">Lemna minor</name>
    <name type="common">Common duckweed</name>
    <dbReference type="NCBI Taxonomy" id="4472"/>
    <lineage>
        <taxon>Eukaryota</taxon>
        <taxon>Viridiplantae</taxon>
        <taxon>Streptophyta</taxon>
        <taxon>Embryophyta</taxon>
        <taxon>Tracheophyta</taxon>
        <taxon>Spermatophyta</taxon>
        <taxon>Magnoliopsida</taxon>
        <taxon>Liliopsida</taxon>
        <taxon>Araceae</taxon>
        <taxon>Lemnoideae</taxon>
        <taxon>Lemna</taxon>
    </lineage>
</organism>
<proteinExistence type="inferred from homology"/>